<reference key="1">
    <citation type="journal article" date="2006" name="Genome Biol.">
        <title>The genome of Rhizobium leguminosarum has recognizable core and accessory components.</title>
        <authorList>
            <person name="Young J.P.W."/>
            <person name="Crossman L.C."/>
            <person name="Johnston A.W.B."/>
            <person name="Thomson N.R."/>
            <person name="Ghazoui Z.F."/>
            <person name="Hull K.H."/>
            <person name="Wexler M."/>
            <person name="Curson A.R.J."/>
            <person name="Todd J.D."/>
            <person name="Poole P.S."/>
            <person name="Mauchline T.H."/>
            <person name="East A.K."/>
            <person name="Quail M.A."/>
            <person name="Churcher C."/>
            <person name="Arrowsmith C."/>
            <person name="Cherevach I."/>
            <person name="Chillingworth T."/>
            <person name="Clarke K."/>
            <person name="Cronin A."/>
            <person name="Davis P."/>
            <person name="Fraser A."/>
            <person name="Hance Z."/>
            <person name="Hauser H."/>
            <person name="Jagels K."/>
            <person name="Moule S."/>
            <person name="Mungall K."/>
            <person name="Norbertczak H."/>
            <person name="Rabbinowitsch E."/>
            <person name="Sanders M."/>
            <person name="Simmonds M."/>
            <person name="Whitehead S."/>
            <person name="Parkhill J."/>
        </authorList>
    </citation>
    <scope>NUCLEOTIDE SEQUENCE [LARGE SCALE GENOMIC DNA]</scope>
    <source>
        <strain>DSM 114642 / LMG 32736 / 3841</strain>
    </source>
</reference>
<accession>Q1MA50</accession>
<gene>
    <name evidence="1" type="primary">leuB</name>
    <name type="ordered locus">RL4707</name>
</gene>
<organism>
    <name type="scientific">Rhizobium johnstonii (strain DSM 114642 / LMG 32736 / 3841)</name>
    <name type="common">Rhizobium leguminosarum bv. viciae</name>
    <dbReference type="NCBI Taxonomy" id="216596"/>
    <lineage>
        <taxon>Bacteria</taxon>
        <taxon>Pseudomonadati</taxon>
        <taxon>Pseudomonadota</taxon>
        <taxon>Alphaproteobacteria</taxon>
        <taxon>Hyphomicrobiales</taxon>
        <taxon>Rhizobiaceae</taxon>
        <taxon>Rhizobium/Agrobacterium group</taxon>
        <taxon>Rhizobium</taxon>
        <taxon>Rhizobium johnstonii</taxon>
    </lineage>
</organism>
<feature type="chain" id="PRO_0000250130" description="3-isopropylmalate dehydrogenase">
    <location>
        <begin position="1"/>
        <end position="370"/>
    </location>
</feature>
<feature type="binding site" evidence="1">
    <location>
        <begin position="77"/>
        <end position="90"/>
    </location>
    <ligand>
        <name>NAD(+)</name>
        <dbReference type="ChEBI" id="CHEBI:57540"/>
    </ligand>
</feature>
<feature type="binding site" evidence="1">
    <location>
        <position position="97"/>
    </location>
    <ligand>
        <name>substrate</name>
    </ligand>
</feature>
<feature type="binding site" evidence="1">
    <location>
        <position position="107"/>
    </location>
    <ligand>
        <name>substrate</name>
    </ligand>
</feature>
<feature type="binding site" evidence="1">
    <location>
        <position position="135"/>
    </location>
    <ligand>
        <name>substrate</name>
    </ligand>
</feature>
<feature type="binding site" evidence="1">
    <location>
        <position position="226"/>
    </location>
    <ligand>
        <name>Mg(2+)</name>
        <dbReference type="ChEBI" id="CHEBI:18420"/>
    </ligand>
</feature>
<feature type="binding site" evidence="1">
    <location>
        <position position="226"/>
    </location>
    <ligand>
        <name>substrate</name>
    </ligand>
</feature>
<feature type="binding site" evidence="1">
    <location>
        <position position="250"/>
    </location>
    <ligand>
        <name>Mg(2+)</name>
        <dbReference type="ChEBI" id="CHEBI:18420"/>
    </ligand>
</feature>
<feature type="binding site" evidence="1">
    <location>
        <position position="254"/>
    </location>
    <ligand>
        <name>Mg(2+)</name>
        <dbReference type="ChEBI" id="CHEBI:18420"/>
    </ligand>
</feature>
<feature type="binding site" evidence="1">
    <location>
        <begin position="290"/>
        <end position="302"/>
    </location>
    <ligand>
        <name>NAD(+)</name>
        <dbReference type="ChEBI" id="CHEBI:57540"/>
    </ligand>
</feature>
<feature type="site" description="Important for catalysis" evidence="1">
    <location>
        <position position="142"/>
    </location>
</feature>
<feature type="site" description="Important for catalysis" evidence="1">
    <location>
        <position position="193"/>
    </location>
</feature>
<proteinExistence type="inferred from homology"/>
<comment type="function">
    <text evidence="1">Catalyzes the oxidation of 3-carboxy-2-hydroxy-4-methylpentanoate (3-isopropylmalate) to 3-carboxy-4-methyl-2-oxopentanoate. The product decarboxylates to 4-methyl-2 oxopentanoate.</text>
</comment>
<comment type="catalytic activity">
    <reaction evidence="1">
        <text>(2R,3S)-3-isopropylmalate + NAD(+) = 4-methyl-2-oxopentanoate + CO2 + NADH</text>
        <dbReference type="Rhea" id="RHEA:32271"/>
        <dbReference type="ChEBI" id="CHEBI:16526"/>
        <dbReference type="ChEBI" id="CHEBI:17865"/>
        <dbReference type="ChEBI" id="CHEBI:35121"/>
        <dbReference type="ChEBI" id="CHEBI:57540"/>
        <dbReference type="ChEBI" id="CHEBI:57945"/>
        <dbReference type="EC" id="1.1.1.85"/>
    </reaction>
</comment>
<comment type="cofactor">
    <cofactor evidence="1">
        <name>Mg(2+)</name>
        <dbReference type="ChEBI" id="CHEBI:18420"/>
    </cofactor>
    <cofactor evidence="1">
        <name>Mn(2+)</name>
        <dbReference type="ChEBI" id="CHEBI:29035"/>
    </cofactor>
    <text evidence="1">Binds 1 Mg(2+) or Mn(2+) ion per subunit.</text>
</comment>
<comment type="pathway">
    <text evidence="1">Amino-acid biosynthesis; L-leucine biosynthesis; L-leucine from 3-methyl-2-oxobutanoate: step 3/4.</text>
</comment>
<comment type="subunit">
    <text evidence="1">Homodimer.</text>
</comment>
<comment type="subcellular location">
    <subcellularLocation>
        <location evidence="1">Cytoplasm</location>
    </subcellularLocation>
</comment>
<comment type="similarity">
    <text evidence="1">Belongs to the isocitrate and isopropylmalate dehydrogenases family. LeuB type 1 subfamily.</text>
</comment>
<name>LEU3_RHIJ3</name>
<sequence length="370" mass="39661">MTARNLFLLPGDGIGPEAMGEVRKIIAYMNEAMNAGFVTDEGLVGGCAYDAHGAAISEADMQKALAADAVLFGAVGGPKWDSVPYEVRPEAGLLRLRKDLQLFANLRPAICYPALAAASSLKPELVEGLDILIIRELTGGVYFGEPKEIIDLGNGQKRGIDTQVYDTYEIERIAGVAFEMARTRQNRVCSMEKRNVMKSGVLWNQVVTETHKAKYSDVQLEHMLADAGGMQLVRQPKQFDVIVTDNLFGDMLSDVAAMLTGSLGMLPSASLGAPDGKTGKRKALYEPVHGSAPDIAGKGIANPIAMIASFAMCLRYSFNLVKEADDLEKAIANVLDKGIRTGDIMADGARQVGTVEMGDAILAEFKTLSA</sequence>
<protein>
    <recommendedName>
        <fullName evidence="1">3-isopropylmalate dehydrogenase</fullName>
        <ecNumber evidence="1">1.1.1.85</ecNumber>
    </recommendedName>
    <alternativeName>
        <fullName evidence="1">3-IPM-DH</fullName>
    </alternativeName>
    <alternativeName>
        <fullName evidence="1">Beta-IPM dehydrogenase</fullName>
        <shortName evidence="1">IMDH</shortName>
    </alternativeName>
</protein>
<keyword id="KW-0028">Amino-acid biosynthesis</keyword>
<keyword id="KW-0100">Branched-chain amino acid biosynthesis</keyword>
<keyword id="KW-0963">Cytoplasm</keyword>
<keyword id="KW-0432">Leucine biosynthesis</keyword>
<keyword id="KW-0460">Magnesium</keyword>
<keyword id="KW-0464">Manganese</keyword>
<keyword id="KW-0479">Metal-binding</keyword>
<keyword id="KW-0520">NAD</keyword>
<keyword id="KW-0560">Oxidoreductase</keyword>
<evidence type="ECO:0000255" key="1">
    <source>
        <dbReference type="HAMAP-Rule" id="MF_01033"/>
    </source>
</evidence>
<dbReference type="EC" id="1.1.1.85" evidence="1"/>
<dbReference type="EMBL" id="AM236080">
    <property type="protein sequence ID" value="CAK10190.1"/>
    <property type="molecule type" value="Genomic_DNA"/>
</dbReference>
<dbReference type="RefSeq" id="WP_003543987.1">
    <property type="nucleotide sequence ID" value="NC_008380.1"/>
</dbReference>
<dbReference type="SMR" id="Q1MA50"/>
<dbReference type="EnsemblBacteria" id="CAK10190">
    <property type="protein sequence ID" value="CAK10190"/>
    <property type="gene ID" value="RL4707"/>
</dbReference>
<dbReference type="KEGG" id="rle:RL4707"/>
<dbReference type="eggNOG" id="COG0473">
    <property type="taxonomic scope" value="Bacteria"/>
</dbReference>
<dbReference type="HOGENOM" id="CLU_031953_0_3_5"/>
<dbReference type="UniPathway" id="UPA00048">
    <property type="reaction ID" value="UER00072"/>
</dbReference>
<dbReference type="Proteomes" id="UP000006575">
    <property type="component" value="Chromosome"/>
</dbReference>
<dbReference type="GO" id="GO:0005829">
    <property type="term" value="C:cytosol"/>
    <property type="evidence" value="ECO:0007669"/>
    <property type="project" value="TreeGrafter"/>
</dbReference>
<dbReference type="GO" id="GO:0003862">
    <property type="term" value="F:3-isopropylmalate dehydrogenase activity"/>
    <property type="evidence" value="ECO:0007669"/>
    <property type="project" value="UniProtKB-UniRule"/>
</dbReference>
<dbReference type="GO" id="GO:0000287">
    <property type="term" value="F:magnesium ion binding"/>
    <property type="evidence" value="ECO:0007669"/>
    <property type="project" value="InterPro"/>
</dbReference>
<dbReference type="GO" id="GO:0051287">
    <property type="term" value="F:NAD binding"/>
    <property type="evidence" value="ECO:0007669"/>
    <property type="project" value="InterPro"/>
</dbReference>
<dbReference type="GO" id="GO:0009098">
    <property type="term" value="P:L-leucine biosynthetic process"/>
    <property type="evidence" value="ECO:0007669"/>
    <property type="project" value="UniProtKB-UniRule"/>
</dbReference>
<dbReference type="FunFam" id="3.40.718.10:FF:000006">
    <property type="entry name" value="3-isopropylmalate dehydrogenase"/>
    <property type="match status" value="1"/>
</dbReference>
<dbReference type="Gene3D" id="3.40.718.10">
    <property type="entry name" value="Isopropylmalate Dehydrogenase"/>
    <property type="match status" value="1"/>
</dbReference>
<dbReference type="HAMAP" id="MF_01033">
    <property type="entry name" value="LeuB_type1"/>
    <property type="match status" value="1"/>
</dbReference>
<dbReference type="InterPro" id="IPR019818">
    <property type="entry name" value="IsoCit/isopropylmalate_DH_CS"/>
</dbReference>
<dbReference type="InterPro" id="IPR024084">
    <property type="entry name" value="IsoPropMal-DH-like_dom"/>
</dbReference>
<dbReference type="InterPro" id="IPR004429">
    <property type="entry name" value="Isopropylmalate_DH"/>
</dbReference>
<dbReference type="NCBIfam" id="TIGR00169">
    <property type="entry name" value="leuB"/>
    <property type="match status" value="1"/>
</dbReference>
<dbReference type="PANTHER" id="PTHR42979">
    <property type="entry name" value="3-ISOPROPYLMALATE DEHYDROGENASE"/>
    <property type="match status" value="1"/>
</dbReference>
<dbReference type="PANTHER" id="PTHR42979:SF1">
    <property type="entry name" value="3-ISOPROPYLMALATE DEHYDROGENASE"/>
    <property type="match status" value="1"/>
</dbReference>
<dbReference type="Pfam" id="PF00180">
    <property type="entry name" value="Iso_dh"/>
    <property type="match status" value="1"/>
</dbReference>
<dbReference type="SMART" id="SM01329">
    <property type="entry name" value="Iso_dh"/>
    <property type="match status" value="1"/>
</dbReference>
<dbReference type="SUPFAM" id="SSF53659">
    <property type="entry name" value="Isocitrate/Isopropylmalate dehydrogenase-like"/>
    <property type="match status" value="1"/>
</dbReference>
<dbReference type="PROSITE" id="PS00470">
    <property type="entry name" value="IDH_IMDH"/>
    <property type="match status" value="1"/>
</dbReference>